<feature type="chain" id="PRO_0000119368" description="A-type ATP synthase subunit C">
    <location>
        <begin position="1"/>
        <end position="385"/>
    </location>
</feature>
<proteinExistence type="inferred from homology"/>
<protein>
    <recommendedName>
        <fullName evidence="1">A-type ATP synthase subunit C</fullName>
    </recommendedName>
</protein>
<sequence length="385" mass="42441">MADSITTIVTALGFPSIESFIGVLLLGGAIIGAIVVIATIRPILDLFPFAYPNARVRARIGRLLNEKQLSEILETESMEEFKNYLRGLPDYAKYIDRFPIEKALESQLAETYEMVSQIAPASIRDPFRANLKRWDVRNIKSLITAKAAGLSAEETVNLLVPGGEVYEIIEGLADASSVQEVVTGLEATEYAGVLEDALSGYEETGMLLPIEAALDRKFLEGLIRTVGSPSDDNTKILHTYFGTMVDISNLKIILRAKADGLSYDDISPYIVPHGYQIREWKLKDLMESEDVSGVVSGLEGTDYGQMLSEALSEYTSTGSVAVFERVLEDNLNRMARNFALKKPFGVGPMIGFLSRKEVEVKNLKVIARSKREPGFPEAMVKEMLA</sequence>
<reference key="1">
    <citation type="journal article" date="1997" name="J. Bacteriol.">
        <title>Complete genome sequence of Methanobacterium thermoautotrophicum deltaH: functional analysis and comparative genomics.</title>
        <authorList>
            <person name="Smith D.R."/>
            <person name="Doucette-Stamm L.A."/>
            <person name="Deloughery C."/>
            <person name="Lee H.-M."/>
            <person name="Dubois J."/>
            <person name="Aldredge T."/>
            <person name="Bashirzadeh R."/>
            <person name="Blakely D."/>
            <person name="Cook R."/>
            <person name="Gilbert K."/>
            <person name="Harrison D."/>
            <person name="Hoang L."/>
            <person name="Keagle P."/>
            <person name="Lumm W."/>
            <person name="Pothier B."/>
            <person name="Qiu D."/>
            <person name="Spadafora R."/>
            <person name="Vicare R."/>
            <person name="Wang Y."/>
            <person name="Wierzbowski J."/>
            <person name="Gibson R."/>
            <person name="Jiwani N."/>
            <person name="Caruso A."/>
            <person name="Bush D."/>
            <person name="Safer H."/>
            <person name="Patwell D."/>
            <person name="Prabhakar S."/>
            <person name="McDougall S."/>
            <person name="Shimer G."/>
            <person name="Goyal A."/>
            <person name="Pietrovski S."/>
            <person name="Church G.M."/>
            <person name="Daniels C.J."/>
            <person name="Mao J.-I."/>
            <person name="Rice P."/>
            <person name="Noelling J."/>
            <person name="Reeve J.N."/>
        </authorList>
    </citation>
    <scope>NUCLEOTIDE SEQUENCE [LARGE SCALE GENOMIC DNA]</scope>
    <source>
        <strain>ATCC 29096 / DSM 1053 / JCM 10044 / NBRC 100330 / Delta H</strain>
    </source>
</reference>
<evidence type="ECO:0000255" key="1">
    <source>
        <dbReference type="HAMAP-Rule" id="MF_00314"/>
    </source>
</evidence>
<comment type="function">
    <text evidence="1">Component of the A-type ATP synthase that produces ATP from ADP in the presence of a proton gradient across the membrane.</text>
</comment>
<comment type="subunit">
    <text evidence="1">Has multiple subunits with at least A(3), B(3), C, D, E, F, H, I and proteolipid K(x).</text>
</comment>
<comment type="subcellular location">
    <subcellularLocation>
        <location evidence="1">Cell membrane</location>
        <topology evidence="1">Peripheral membrane protein</topology>
    </subcellularLocation>
</comment>
<comment type="similarity">
    <text evidence="1">Belongs to the V-ATPase V0D/AC39 subunit family.</text>
</comment>
<dbReference type="EMBL" id="AE000666">
    <property type="protein sequence ID" value="AAB85453.1"/>
    <property type="molecule type" value="Genomic_DNA"/>
</dbReference>
<dbReference type="PIR" id="A69228">
    <property type="entry name" value="A69228"/>
</dbReference>
<dbReference type="RefSeq" id="WP_010876588.1">
    <property type="nucleotide sequence ID" value="NC_000916.1"/>
</dbReference>
<dbReference type="SMR" id="O27038"/>
<dbReference type="FunCoup" id="O27038">
    <property type="interactions" value="1"/>
</dbReference>
<dbReference type="IntAct" id="O27038">
    <property type="interactions" value="2"/>
</dbReference>
<dbReference type="STRING" id="187420.MTH_957"/>
<dbReference type="PaxDb" id="187420-MTH_957"/>
<dbReference type="EnsemblBacteria" id="AAB85453">
    <property type="protein sequence ID" value="AAB85453"/>
    <property type="gene ID" value="MTH_957"/>
</dbReference>
<dbReference type="GeneID" id="1471365"/>
<dbReference type="KEGG" id="mth:MTH_957"/>
<dbReference type="PATRIC" id="fig|187420.15.peg.940"/>
<dbReference type="HOGENOM" id="CLU_059311_0_0_2"/>
<dbReference type="InParanoid" id="O27038"/>
<dbReference type="Proteomes" id="UP000005223">
    <property type="component" value="Chromosome"/>
</dbReference>
<dbReference type="GO" id="GO:0005886">
    <property type="term" value="C:plasma membrane"/>
    <property type="evidence" value="ECO:0007669"/>
    <property type="project" value="UniProtKB-SubCell"/>
</dbReference>
<dbReference type="GO" id="GO:0033179">
    <property type="term" value="C:proton-transporting V-type ATPase, V0 domain"/>
    <property type="evidence" value="ECO:0007669"/>
    <property type="project" value="InterPro"/>
</dbReference>
<dbReference type="GO" id="GO:0005524">
    <property type="term" value="F:ATP binding"/>
    <property type="evidence" value="ECO:0007669"/>
    <property type="project" value="UniProtKB-UniRule"/>
</dbReference>
<dbReference type="GO" id="GO:0046933">
    <property type="term" value="F:proton-transporting ATP synthase activity, rotational mechanism"/>
    <property type="evidence" value="ECO:0007669"/>
    <property type="project" value="UniProtKB-UniRule"/>
</dbReference>
<dbReference type="GO" id="GO:0046961">
    <property type="term" value="F:proton-transporting ATPase activity, rotational mechanism"/>
    <property type="evidence" value="ECO:0007669"/>
    <property type="project" value="InterPro"/>
</dbReference>
<dbReference type="GO" id="GO:0042777">
    <property type="term" value="P:proton motive force-driven plasma membrane ATP synthesis"/>
    <property type="evidence" value="ECO:0007669"/>
    <property type="project" value="UniProtKB-UniRule"/>
</dbReference>
<dbReference type="Gene3D" id="1.10.132.50">
    <property type="entry name" value="ATP synthase (C/AC39) subunit, domain 3"/>
    <property type="match status" value="1"/>
</dbReference>
<dbReference type="Gene3D" id="1.20.1690.10">
    <property type="entry name" value="V-type ATP synthase subunit C domain"/>
    <property type="match status" value="2"/>
</dbReference>
<dbReference type="HAMAP" id="MF_00314">
    <property type="entry name" value="ATP_synth_C_arch"/>
    <property type="match status" value="1"/>
</dbReference>
<dbReference type="InterPro" id="IPR036079">
    <property type="entry name" value="ATPase_csu/dsu_sf"/>
</dbReference>
<dbReference type="InterPro" id="IPR014272">
    <property type="entry name" value="ATPase_V0-cplx_csu"/>
</dbReference>
<dbReference type="InterPro" id="IPR002843">
    <property type="entry name" value="ATPase_V0-cplx_csu/dsu"/>
</dbReference>
<dbReference type="InterPro" id="IPR050873">
    <property type="entry name" value="V-ATPase_V0D/AC39_subunit"/>
</dbReference>
<dbReference type="InterPro" id="IPR035067">
    <property type="entry name" value="V-type_ATPase_csu/dsu"/>
</dbReference>
<dbReference type="InterPro" id="IPR044911">
    <property type="entry name" value="V-type_ATPase_csu/dsu_dom_3"/>
</dbReference>
<dbReference type="NCBIfam" id="TIGR02923">
    <property type="entry name" value="AhaC"/>
    <property type="match status" value="1"/>
</dbReference>
<dbReference type="NCBIfam" id="NF002267">
    <property type="entry name" value="PRK01198.1-3"/>
    <property type="match status" value="1"/>
</dbReference>
<dbReference type="PANTHER" id="PTHR38682">
    <property type="entry name" value="V-TYPE ATP SYNTHASE SUBUNIT C"/>
    <property type="match status" value="1"/>
</dbReference>
<dbReference type="PANTHER" id="PTHR38682:SF1">
    <property type="entry name" value="V-TYPE ATP SYNTHASE SUBUNIT C"/>
    <property type="match status" value="1"/>
</dbReference>
<dbReference type="Pfam" id="PF01992">
    <property type="entry name" value="vATP-synt_AC39"/>
    <property type="match status" value="1"/>
</dbReference>
<dbReference type="SUPFAM" id="SSF103486">
    <property type="entry name" value="V-type ATP synthase subunit C"/>
    <property type="match status" value="1"/>
</dbReference>
<accession>O27038</accession>
<organism>
    <name type="scientific">Methanothermobacter thermautotrophicus (strain ATCC 29096 / DSM 1053 / JCM 10044 / NBRC 100330 / Delta H)</name>
    <name type="common">Methanobacterium thermoautotrophicum</name>
    <dbReference type="NCBI Taxonomy" id="187420"/>
    <lineage>
        <taxon>Archaea</taxon>
        <taxon>Methanobacteriati</taxon>
        <taxon>Methanobacteriota</taxon>
        <taxon>Methanomada group</taxon>
        <taxon>Methanobacteria</taxon>
        <taxon>Methanobacteriales</taxon>
        <taxon>Methanobacteriaceae</taxon>
        <taxon>Methanothermobacter</taxon>
    </lineage>
</organism>
<name>AATC_METTH</name>
<keyword id="KW-0066">ATP synthesis</keyword>
<keyword id="KW-1003">Cell membrane</keyword>
<keyword id="KW-0375">Hydrogen ion transport</keyword>
<keyword id="KW-0406">Ion transport</keyword>
<keyword id="KW-0472">Membrane</keyword>
<keyword id="KW-1185">Reference proteome</keyword>
<keyword id="KW-0813">Transport</keyword>
<gene>
    <name evidence="1" type="primary">atpC</name>
    <name type="ordered locus">MTH_957</name>
</gene>